<name>AMPE_SHIFL</name>
<reference key="1">
    <citation type="journal article" date="2002" name="Nucleic Acids Res.">
        <title>Genome sequence of Shigella flexneri 2a: insights into pathogenicity through comparison with genomes of Escherichia coli K12 and O157.</title>
        <authorList>
            <person name="Jin Q."/>
            <person name="Yuan Z."/>
            <person name="Xu J."/>
            <person name="Wang Y."/>
            <person name="Shen Y."/>
            <person name="Lu W."/>
            <person name="Wang J."/>
            <person name="Liu H."/>
            <person name="Yang J."/>
            <person name="Yang F."/>
            <person name="Zhang X."/>
            <person name="Zhang J."/>
            <person name="Yang G."/>
            <person name="Wu H."/>
            <person name="Qu D."/>
            <person name="Dong J."/>
            <person name="Sun L."/>
            <person name="Xue Y."/>
            <person name="Zhao A."/>
            <person name="Gao Y."/>
            <person name="Zhu J."/>
            <person name="Kan B."/>
            <person name="Ding K."/>
            <person name="Chen S."/>
            <person name="Cheng H."/>
            <person name="Yao Z."/>
            <person name="He B."/>
            <person name="Chen R."/>
            <person name="Ma D."/>
            <person name="Qiang B."/>
            <person name="Wen Y."/>
            <person name="Hou Y."/>
            <person name="Yu J."/>
        </authorList>
    </citation>
    <scope>NUCLEOTIDE SEQUENCE [LARGE SCALE GENOMIC DNA]</scope>
    <source>
        <strain>301 / Serotype 2a</strain>
    </source>
</reference>
<reference key="2">
    <citation type="journal article" date="2003" name="Infect. Immun.">
        <title>Complete genome sequence and comparative genomics of Shigella flexneri serotype 2a strain 2457T.</title>
        <authorList>
            <person name="Wei J."/>
            <person name="Goldberg M.B."/>
            <person name="Burland V."/>
            <person name="Venkatesan M.M."/>
            <person name="Deng W."/>
            <person name="Fournier G."/>
            <person name="Mayhew G.F."/>
            <person name="Plunkett G. III"/>
            <person name="Rose D.J."/>
            <person name="Darling A."/>
            <person name="Mau B."/>
            <person name="Perna N.T."/>
            <person name="Payne S.M."/>
            <person name="Runyen-Janecky L.J."/>
            <person name="Zhou S."/>
            <person name="Schwartz D.C."/>
            <person name="Blattner F.R."/>
        </authorList>
    </citation>
    <scope>NUCLEOTIDE SEQUENCE [LARGE SCALE GENOMIC DNA]</scope>
    <source>
        <strain>ATCC 700930 / 2457T / Serotype 2a</strain>
    </source>
</reference>
<dbReference type="EMBL" id="AE005674">
    <property type="protein sequence ID" value="AAN41772.2"/>
    <property type="molecule type" value="Genomic_DNA"/>
</dbReference>
<dbReference type="EMBL" id="AE014073">
    <property type="protein sequence ID" value="AAP15653.1"/>
    <property type="molecule type" value="Genomic_DNA"/>
</dbReference>
<dbReference type="RefSeq" id="NP_706065.2">
    <property type="nucleotide sequence ID" value="NC_004337.2"/>
</dbReference>
<dbReference type="RefSeq" id="WP_000172005.1">
    <property type="nucleotide sequence ID" value="NZ_WPGW01000007.1"/>
</dbReference>
<dbReference type="STRING" id="198214.SF0108"/>
<dbReference type="PaxDb" id="198214-SF0108"/>
<dbReference type="GeneID" id="1027516"/>
<dbReference type="GeneID" id="93777325"/>
<dbReference type="KEGG" id="sfl:SF0108"/>
<dbReference type="KEGG" id="sfx:S0110"/>
<dbReference type="PATRIC" id="fig|198214.7.peg.122"/>
<dbReference type="HOGENOM" id="CLU_054212_2_2_6"/>
<dbReference type="Proteomes" id="UP000001006">
    <property type="component" value="Chromosome"/>
</dbReference>
<dbReference type="Proteomes" id="UP000002673">
    <property type="component" value="Chromosome"/>
</dbReference>
<dbReference type="GO" id="GO:0005886">
    <property type="term" value="C:plasma membrane"/>
    <property type="evidence" value="ECO:0007669"/>
    <property type="project" value="UniProtKB-SubCell"/>
</dbReference>
<dbReference type="GO" id="GO:0046677">
    <property type="term" value="P:response to antibiotic"/>
    <property type="evidence" value="ECO:0007669"/>
    <property type="project" value="TreeGrafter"/>
</dbReference>
<dbReference type="InterPro" id="IPR031347">
    <property type="entry name" value="AmpE"/>
</dbReference>
<dbReference type="InterPro" id="IPR052966">
    <property type="entry name" value="Beta-lactamase_Reg"/>
</dbReference>
<dbReference type="NCBIfam" id="NF008219">
    <property type="entry name" value="PRK10987.1"/>
    <property type="match status" value="1"/>
</dbReference>
<dbReference type="PANTHER" id="PTHR38684">
    <property type="entry name" value="PROTEIN AMPE"/>
    <property type="match status" value="1"/>
</dbReference>
<dbReference type="PANTHER" id="PTHR38684:SF1">
    <property type="entry name" value="PROTEIN AMPE"/>
    <property type="match status" value="1"/>
</dbReference>
<dbReference type="Pfam" id="PF17113">
    <property type="entry name" value="AmpE"/>
    <property type="match status" value="1"/>
</dbReference>
<comment type="function">
    <text evidence="1">Putative signaling protein in beta-lactamase regulation. AmpE seems not to act as a direct sensor for beta-lactams (By similarity).</text>
</comment>
<comment type="subcellular location">
    <subcellularLocation>
        <location evidence="1">Cell inner membrane</location>
        <topology evidence="1">Multi-pass membrane protein</topology>
    </subcellularLocation>
</comment>
<feature type="chain" id="PRO_0000064593" description="Protein AmpE">
    <location>
        <begin position="1"/>
        <end position="284"/>
    </location>
</feature>
<feature type="topological domain" description="Periplasmic" evidence="2">
    <location>
        <begin position="1"/>
        <end position="43"/>
    </location>
</feature>
<feature type="transmembrane region" description="Helical" evidence="2">
    <location>
        <begin position="44"/>
        <end position="60"/>
    </location>
</feature>
<feature type="topological domain" description="Cytoplasmic" evidence="2">
    <location>
        <begin position="61"/>
        <end position="67"/>
    </location>
</feature>
<feature type="transmembrane region" description="Helical" evidence="2">
    <location>
        <begin position="68"/>
        <end position="84"/>
    </location>
</feature>
<feature type="topological domain" description="Periplasmic" evidence="2">
    <location>
        <begin position="85"/>
        <end position="194"/>
    </location>
</feature>
<feature type="transmembrane region" description="Helical" evidence="2">
    <location>
        <begin position="195"/>
        <end position="211"/>
    </location>
</feature>
<feature type="topological domain" description="Cytoplasmic" evidence="2">
    <location>
        <begin position="212"/>
        <end position="267"/>
    </location>
</feature>
<feature type="transmembrane region" description="Helical" evidence="2">
    <location>
        <begin position="268"/>
        <end position="284"/>
    </location>
</feature>
<evidence type="ECO:0000250" key="1"/>
<evidence type="ECO:0000255" key="2"/>
<proteinExistence type="inferred from homology"/>
<gene>
    <name type="primary">ampE</name>
    <name type="ordered locus">SF0108</name>
    <name type="ordered locus">S0110</name>
</gene>
<keyword id="KW-0997">Cell inner membrane</keyword>
<keyword id="KW-1003">Cell membrane</keyword>
<keyword id="KW-0472">Membrane</keyword>
<keyword id="KW-1185">Reference proteome</keyword>
<keyword id="KW-0812">Transmembrane</keyword>
<keyword id="KW-1133">Transmembrane helix</keyword>
<sequence>MTLFTTLLVLIFERLFKLGEHWQLDHRLEAFFRRVKHFSLGRTLGMTIIAMGVTFLLLRALQGVLFNVPTLLVWLLIGLLCIGAGKVRLHYHAYLTAASRNDSHARATMAGELTMIHGVPAGCDEREYLRELQNALLWINFRFYLAPLFWLIVGGTWGPVTLMGYAFLRAWQYWLARYQTPHHRLQSGIDAVLHVLDWVPVRLAGVVYALIGHGEKALPAWFASLGDFHTSQYQVLTRLAQFSLAREPHVDKVETPKAAVSMAKKTSFVVVVVIALLTIYGALV</sequence>
<protein>
    <recommendedName>
        <fullName>Protein AmpE</fullName>
    </recommendedName>
</protein>
<accession>P0AE15</accession>
<accession>P13017</accession>
<organism>
    <name type="scientific">Shigella flexneri</name>
    <dbReference type="NCBI Taxonomy" id="623"/>
    <lineage>
        <taxon>Bacteria</taxon>
        <taxon>Pseudomonadati</taxon>
        <taxon>Pseudomonadota</taxon>
        <taxon>Gammaproteobacteria</taxon>
        <taxon>Enterobacterales</taxon>
        <taxon>Enterobacteriaceae</taxon>
        <taxon>Shigella</taxon>
    </lineage>
</organism>